<accession>H8EVT0</accession>
<sequence>MTGPPRLSSDLDALLRRVAGHDQAAFAEFYDHTKSRVYGLVMRVLRDTGYSEETTQEIYLEVWRNASEFDSAKGSALAWLLTMAHRRAVDRVRCEQAGNQREVRYGAANVDPASDVVADLAIAGDERRRVTECLKALTDTQRQCIELAYYGGLTYVEVSRRLAANLSTIKSRMRDALRSLRNCLDVS</sequence>
<name>SIGK_MYCTE</name>
<keyword id="KW-0238">DNA-binding</keyword>
<keyword id="KW-0731">Sigma factor</keyword>
<keyword id="KW-0804">Transcription</keyword>
<keyword id="KW-0805">Transcription regulation</keyword>
<protein>
    <recommendedName>
        <fullName>ECF RNA polymerase sigma factor SigK</fullName>
        <shortName>ECF sigma factor SigK</shortName>
    </recommendedName>
    <alternativeName>
        <fullName>Alternative RNA polymerase sigma factor SigK</fullName>
    </alternativeName>
    <alternativeName>
        <fullName>RNA polymerase sigma-K factor</fullName>
        <shortName>Sigma-K factor</shortName>
    </alternativeName>
</protein>
<gene>
    <name type="primary">sigK</name>
    <name type="ordered locus">ERDMAN_0488</name>
</gene>
<organism>
    <name type="scientific">Mycobacterium tuberculosis (strain ATCC 35801 / TMC 107 / Erdman)</name>
    <dbReference type="NCBI Taxonomy" id="652616"/>
    <lineage>
        <taxon>Bacteria</taxon>
        <taxon>Bacillati</taxon>
        <taxon>Actinomycetota</taxon>
        <taxon>Actinomycetes</taxon>
        <taxon>Mycobacteriales</taxon>
        <taxon>Mycobacteriaceae</taxon>
        <taxon>Mycobacterium</taxon>
        <taxon>Mycobacterium tuberculosis complex</taxon>
    </lineage>
</organism>
<reference key="1">
    <citation type="journal article" date="2012" name="J. Bacteriol.">
        <title>Complete annotated genome sequence of Mycobacterium tuberculosis Erdman.</title>
        <authorList>
            <person name="Miyoshi-Akiyama T."/>
            <person name="Matsumura K."/>
            <person name="Iwai H."/>
            <person name="Funatogawa K."/>
            <person name="Kirikae T."/>
        </authorList>
    </citation>
    <scope>NUCLEOTIDE SEQUENCE [LARGE SCALE GENOMIC DNA]</scope>
    <source>
        <strain>ATCC 35801 / TMC 107 / Erdman</strain>
    </source>
</reference>
<reference key="2">
    <citation type="journal article" date="2010" name="Mol. Microbiol.">
        <title>M. tuberculosis intramembrane protease Rip1 controls transcription through three anti-sigma factor substrates.</title>
        <authorList>
            <person name="Sklar J.G."/>
            <person name="Makinoshima H."/>
            <person name="Schneider J.S."/>
            <person name="Glickman M.S."/>
        </authorList>
    </citation>
    <scope>DISRUPTION PHENOTYPE</scope>
    <source>
        <strain>ATCC 35801 / TMC 107 / Erdman</strain>
    </source>
</reference>
<feature type="chain" id="PRO_0000422692" description="ECF RNA polymerase sigma factor SigK">
    <location>
        <begin position="1"/>
        <end position="187"/>
    </location>
</feature>
<feature type="DNA-binding region" description="H-T-H motif" evidence="1">
    <location>
        <begin position="155"/>
        <end position="174"/>
    </location>
</feature>
<feature type="region of interest" description="Sigma-70 factor domain-2">
    <location>
        <begin position="30"/>
        <end position="96"/>
    </location>
</feature>
<feature type="region of interest" description="Sigma-70 factor domain-4">
    <location>
        <begin position="133"/>
        <end position="182"/>
    </location>
</feature>
<feature type="short sequence motif" description="Interaction with polymerase core subunit RpoC">
    <location>
        <begin position="53"/>
        <end position="56"/>
    </location>
</feature>
<proteinExistence type="inferred from homology"/>
<dbReference type="EMBL" id="AP012340">
    <property type="protein sequence ID" value="BAL64304.1"/>
    <property type="molecule type" value="Genomic_DNA"/>
</dbReference>
<dbReference type="RefSeq" id="WP_003402246.1">
    <property type="nucleotide sequence ID" value="NZ_KK339487.1"/>
</dbReference>
<dbReference type="SMR" id="H8EVT0"/>
<dbReference type="KEGG" id="mtn:ERDMAN_0488"/>
<dbReference type="PATRIC" id="fig|652616.3.peg.494"/>
<dbReference type="HOGENOM" id="CLU_047691_9_3_11"/>
<dbReference type="GO" id="GO:0003677">
    <property type="term" value="F:DNA binding"/>
    <property type="evidence" value="ECO:0007669"/>
    <property type="project" value="UniProtKB-KW"/>
</dbReference>
<dbReference type="GO" id="GO:0016987">
    <property type="term" value="F:sigma factor activity"/>
    <property type="evidence" value="ECO:0007669"/>
    <property type="project" value="UniProtKB-KW"/>
</dbReference>
<dbReference type="GO" id="GO:0006352">
    <property type="term" value="P:DNA-templated transcription initiation"/>
    <property type="evidence" value="ECO:0007669"/>
    <property type="project" value="InterPro"/>
</dbReference>
<dbReference type="CDD" id="cd06171">
    <property type="entry name" value="Sigma70_r4"/>
    <property type="match status" value="1"/>
</dbReference>
<dbReference type="FunFam" id="1.10.1740.10:FF:000021">
    <property type="entry name" value="ECF RNA polymerase sigma factor SigK"/>
    <property type="match status" value="1"/>
</dbReference>
<dbReference type="Gene3D" id="1.10.1740.10">
    <property type="match status" value="1"/>
</dbReference>
<dbReference type="Gene3D" id="1.10.10.10">
    <property type="entry name" value="Winged helix-like DNA-binding domain superfamily/Winged helix DNA-binding domain"/>
    <property type="match status" value="1"/>
</dbReference>
<dbReference type="InterPro" id="IPR039425">
    <property type="entry name" value="RNA_pol_sigma-70-like"/>
</dbReference>
<dbReference type="InterPro" id="IPR014284">
    <property type="entry name" value="RNA_pol_sigma-70_dom"/>
</dbReference>
<dbReference type="InterPro" id="IPR007627">
    <property type="entry name" value="RNA_pol_sigma70_r2"/>
</dbReference>
<dbReference type="InterPro" id="IPR007630">
    <property type="entry name" value="RNA_pol_sigma70_r4"/>
</dbReference>
<dbReference type="InterPro" id="IPR013325">
    <property type="entry name" value="RNA_pol_sigma_r2"/>
</dbReference>
<dbReference type="InterPro" id="IPR013324">
    <property type="entry name" value="RNA_pol_sigma_r3/r4-like"/>
</dbReference>
<dbReference type="InterPro" id="IPR036388">
    <property type="entry name" value="WH-like_DNA-bd_sf"/>
</dbReference>
<dbReference type="NCBIfam" id="NF007228">
    <property type="entry name" value="PRK09646.1"/>
    <property type="match status" value="1"/>
</dbReference>
<dbReference type="NCBIfam" id="TIGR02937">
    <property type="entry name" value="sigma70-ECF"/>
    <property type="match status" value="1"/>
</dbReference>
<dbReference type="PANTHER" id="PTHR43133:SF66">
    <property type="entry name" value="ECF RNA POLYMERASE SIGMA FACTOR SIGK"/>
    <property type="match status" value="1"/>
</dbReference>
<dbReference type="PANTHER" id="PTHR43133">
    <property type="entry name" value="RNA POLYMERASE ECF-TYPE SIGMA FACTO"/>
    <property type="match status" value="1"/>
</dbReference>
<dbReference type="Pfam" id="PF04542">
    <property type="entry name" value="Sigma70_r2"/>
    <property type="match status" value="1"/>
</dbReference>
<dbReference type="Pfam" id="PF04545">
    <property type="entry name" value="Sigma70_r4"/>
    <property type="match status" value="1"/>
</dbReference>
<dbReference type="SUPFAM" id="SSF88946">
    <property type="entry name" value="Sigma2 domain of RNA polymerase sigma factors"/>
    <property type="match status" value="1"/>
</dbReference>
<dbReference type="SUPFAM" id="SSF88659">
    <property type="entry name" value="Sigma3 and sigma4 domains of RNA polymerase sigma factors"/>
    <property type="match status" value="1"/>
</dbReference>
<evidence type="ECO:0000250" key="1"/>
<evidence type="ECO:0000269" key="2">
    <source>
    </source>
</evidence>
<evidence type="ECO:0000305" key="3"/>
<comment type="function">
    <text evidence="1">Sigma factors are initiation factors that promote the attachment of RNA polymerase to specific initiation sites and are then released. Extracytoplasmic function (ECF) sigma factors are held in an inactive form by an anti-sigma factor until released by regulated intramembrane proteolysis (By similarity).</text>
</comment>
<comment type="subunit">
    <text evidence="1">Interacts transiently with the RNA polymerase catalytic core formed by RpoA, RpoB, RpoC and RpoZ (2 alpha, 1 beta, 1 beta' and 1 omega subunit) to form the RNA polymerase holoenzyme that can initiate transcription. Interacts (via sigma-70 factor domain 4) with anti-sigma-K factor RsKA (By similarity).</text>
</comment>
<comment type="domain">
    <text evidence="1">The sigma-70 factor domain-2 mediates sequence-specific interaction with the -10 element in promoter DNA, and plays an important role in melting the double-stranded DNA and the formation of the transcription bubble. The sigma-70 factor domain-2 mediates interaction with the RNA polymerase subunits RpoB and RpoC (By similarity).</text>
</comment>
<comment type="domain">
    <text evidence="1">The sigma-70 factor domain-4 contains a helix-turn-helix (H-T-H) motif that mediates interaction with the -35 element in promoter DNA. The domain also mediates interaction with the RNA polymerase subunit RpoA. Interactions between sigma-70 factor domain-4 and anti-sigma factors prevents interaction of sigma factors with the RNA polymerase catalytic core (By similarity).</text>
</comment>
<comment type="disruption phenotype">
    <text evidence="2">Loss of phenanthroline induction of katG.</text>
</comment>
<comment type="miscellaneous">
    <text evidence="3">Extracytoplasmic function (ECF) sigma factors are held in an inactive form by an anti-sigma factor until released by regulated intramembrane proteolysis (RIP). RIP occurs when an extracytoplasmic signal triggers a concerted proteolytic cascade to transmit information and elicit cellular responses. The membrane-spanning anti-sigma factor is first cut extracytoplasmically (site-1 protease, S1P), then within the membrane itself (site-2 protease, S2P, Rip1), while cytoplasmic proteases finish degrading the regulatory protein, liberating SigK (Probable).</text>
</comment>
<comment type="similarity">
    <text evidence="3">Belongs to the sigma-70 factor family. ECF subfamily.</text>
</comment>